<name>NUSB_ECOSE</name>
<keyword id="KW-0694">RNA-binding</keyword>
<keyword id="KW-0804">Transcription</keyword>
<keyword id="KW-0889">Transcription antitermination</keyword>
<keyword id="KW-0805">Transcription regulation</keyword>
<reference key="1">
    <citation type="journal article" date="2008" name="DNA Res.">
        <title>Complete genome sequence and comparative analysis of the wild-type commensal Escherichia coli strain SE11 isolated from a healthy adult.</title>
        <authorList>
            <person name="Oshima K."/>
            <person name="Toh H."/>
            <person name="Ogura Y."/>
            <person name="Sasamoto H."/>
            <person name="Morita H."/>
            <person name="Park S.-H."/>
            <person name="Ooka T."/>
            <person name="Iyoda S."/>
            <person name="Taylor T.D."/>
            <person name="Hayashi T."/>
            <person name="Itoh K."/>
            <person name="Hattori M."/>
        </authorList>
    </citation>
    <scope>NUCLEOTIDE SEQUENCE [LARGE SCALE GENOMIC DNA]</scope>
    <source>
        <strain>SE11</strain>
    </source>
</reference>
<comment type="function">
    <text evidence="1">Involved in transcription antitermination. Required for transcription of ribosomal RNA (rRNA) genes. Binds specifically to the boxA antiterminator sequence of the ribosomal RNA (rrn) operons.</text>
</comment>
<comment type="similarity">
    <text evidence="1">Belongs to the NusB family.</text>
</comment>
<feature type="chain" id="PRO_1000092551" description="Transcription antitermination protein NusB">
    <location>
        <begin position="1"/>
        <end position="139"/>
    </location>
</feature>
<proteinExistence type="inferred from homology"/>
<dbReference type="EMBL" id="AP009240">
    <property type="protein sequence ID" value="BAG75962.1"/>
    <property type="molecule type" value="Genomic_DNA"/>
</dbReference>
<dbReference type="RefSeq" id="WP_000801125.1">
    <property type="nucleotide sequence ID" value="NC_011415.1"/>
</dbReference>
<dbReference type="SMR" id="B6HZL7"/>
<dbReference type="GeneID" id="93777044"/>
<dbReference type="KEGG" id="ecy:ECSE_0438"/>
<dbReference type="HOGENOM" id="CLU_087843_4_1_6"/>
<dbReference type="Proteomes" id="UP000008199">
    <property type="component" value="Chromosome"/>
</dbReference>
<dbReference type="GO" id="GO:0005829">
    <property type="term" value="C:cytosol"/>
    <property type="evidence" value="ECO:0007669"/>
    <property type="project" value="TreeGrafter"/>
</dbReference>
<dbReference type="GO" id="GO:0003723">
    <property type="term" value="F:RNA binding"/>
    <property type="evidence" value="ECO:0007669"/>
    <property type="project" value="UniProtKB-UniRule"/>
</dbReference>
<dbReference type="GO" id="GO:0006353">
    <property type="term" value="P:DNA-templated transcription termination"/>
    <property type="evidence" value="ECO:0007669"/>
    <property type="project" value="UniProtKB-UniRule"/>
</dbReference>
<dbReference type="GO" id="GO:0031564">
    <property type="term" value="P:transcription antitermination"/>
    <property type="evidence" value="ECO:0007669"/>
    <property type="project" value="UniProtKB-KW"/>
</dbReference>
<dbReference type="CDD" id="cd00619">
    <property type="entry name" value="Terminator_NusB"/>
    <property type="match status" value="1"/>
</dbReference>
<dbReference type="FunFam" id="1.10.940.10:FF:000001">
    <property type="entry name" value="Transcription antitermination factor NusB"/>
    <property type="match status" value="1"/>
</dbReference>
<dbReference type="Gene3D" id="1.10.940.10">
    <property type="entry name" value="NusB-like"/>
    <property type="match status" value="1"/>
</dbReference>
<dbReference type="HAMAP" id="MF_00073">
    <property type="entry name" value="NusB"/>
    <property type="match status" value="1"/>
</dbReference>
<dbReference type="InterPro" id="IPR035926">
    <property type="entry name" value="NusB-like_sf"/>
</dbReference>
<dbReference type="InterPro" id="IPR011605">
    <property type="entry name" value="NusB_fam"/>
</dbReference>
<dbReference type="InterPro" id="IPR006027">
    <property type="entry name" value="NusB_RsmB_TIM44"/>
</dbReference>
<dbReference type="NCBIfam" id="TIGR01951">
    <property type="entry name" value="nusB"/>
    <property type="match status" value="1"/>
</dbReference>
<dbReference type="PANTHER" id="PTHR11078:SF3">
    <property type="entry name" value="ANTITERMINATION NUSB DOMAIN-CONTAINING PROTEIN"/>
    <property type="match status" value="1"/>
</dbReference>
<dbReference type="PANTHER" id="PTHR11078">
    <property type="entry name" value="N UTILIZATION SUBSTANCE PROTEIN B-RELATED"/>
    <property type="match status" value="1"/>
</dbReference>
<dbReference type="Pfam" id="PF01029">
    <property type="entry name" value="NusB"/>
    <property type="match status" value="1"/>
</dbReference>
<dbReference type="SUPFAM" id="SSF48013">
    <property type="entry name" value="NusB-like"/>
    <property type="match status" value="1"/>
</dbReference>
<evidence type="ECO:0000255" key="1">
    <source>
        <dbReference type="HAMAP-Rule" id="MF_00073"/>
    </source>
</evidence>
<gene>
    <name evidence="1" type="primary">nusB</name>
    <name type="ordered locus">ECSE_0438</name>
</gene>
<protein>
    <recommendedName>
        <fullName evidence="1">Transcription antitermination protein NusB</fullName>
    </recommendedName>
    <alternativeName>
        <fullName evidence="1">Antitermination factor NusB</fullName>
    </alternativeName>
</protein>
<accession>B6HZL7</accession>
<organism>
    <name type="scientific">Escherichia coli (strain SE11)</name>
    <dbReference type="NCBI Taxonomy" id="409438"/>
    <lineage>
        <taxon>Bacteria</taxon>
        <taxon>Pseudomonadati</taxon>
        <taxon>Pseudomonadota</taxon>
        <taxon>Gammaproteobacteria</taxon>
        <taxon>Enterobacterales</taxon>
        <taxon>Enterobacteriaceae</taxon>
        <taxon>Escherichia</taxon>
    </lineage>
</organism>
<sequence length="139" mass="15689">MKPAARRRARECAVQALYSWQLSQNDIADVEYQFLAEQDVKDVDVLYFRELLAGVATNTAYLDGLMKPYLSRLLEELGQVEKAVLRIALYELSKRSDVPYKVAINEAIELAKSFGAEDSHKFVNGVLDKAAPVIRPNKK</sequence>